<gene>
    <name evidence="1" type="primary">truB</name>
    <name type="ordered locus">RPR_00270</name>
</gene>
<accession>C4K0F2</accession>
<reference key="1">
    <citation type="journal article" date="2009" name="PLoS ONE">
        <title>Genome sequence of the endosymbiont Rickettsia peacockii and comparison with virulent Rickettsia rickettsii: identification of virulence factors.</title>
        <authorList>
            <person name="Felsheim R.F."/>
            <person name="Kurtti T.J."/>
            <person name="Munderloh U.G."/>
        </authorList>
    </citation>
    <scope>NUCLEOTIDE SEQUENCE [LARGE SCALE GENOMIC DNA]</scope>
    <source>
        <strain>Rustic</strain>
    </source>
</reference>
<feature type="chain" id="PRO_1000213508" description="tRNA pseudouridine synthase B">
    <location>
        <begin position="1"/>
        <end position="345"/>
    </location>
</feature>
<feature type="active site" description="Nucleophile" evidence="1">
    <location>
        <position position="39"/>
    </location>
</feature>
<organism>
    <name type="scientific">Rickettsia peacockii (strain Rustic)</name>
    <dbReference type="NCBI Taxonomy" id="562019"/>
    <lineage>
        <taxon>Bacteria</taxon>
        <taxon>Pseudomonadati</taxon>
        <taxon>Pseudomonadota</taxon>
        <taxon>Alphaproteobacteria</taxon>
        <taxon>Rickettsiales</taxon>
        <taxon>Rickettsiaceae</taxon>
        <taxon>Rickettsieae</taxon>
        <taxon>Rickettsia</taxon>
        <taxon>spotted fever group</taxon>
    </lineage>
</organism>
<name>TRUB_RICPU</name>
<comment type="function">
    <text evidence="1">Responsible for synthesis of pseudouridine from uracil-55 in the psi GC loop of transfer RNAs.</text>
</comment>
<comment type="catalytic activity">
    <reaction evidence="1">
        <text>uridine(55) in tRNA = pseudouridine(55) in tRNA</text>
        <dbReference type="Rhea" id="RHEA:42532"/>
        <dbReference type="Rhea" id="RHEA-COMP:10101"/>
        <dbReference type="Rhea" id="RHEA-COMP:10102"/>
        <dbReference type="ChEBI" id="CHEBI:65314"/>
        <dbReference type="ChEBI" id="CHEBI:65315"/>
        <dbReference type="EC" id="5.4.99.25"/>
    </reaction>
</comment>
<comment type="similarity">
    <text evidence="1">Belongs to the pseudouridine synthase TruB family. Type 1 subfamily.</text>
</comment>
<proteinExistence type="inferred from homology"/>
<evidence type="ECO:0000255" key="1">
    <source>
        <dbReference type="HAMAP-Rule" id="MF_01080"/>
    </source>
</evidence>
<keyword id="KW-0413">Isomerase</keyword>
<keyword id="KW-0819">tRNA processing</keyword>
<sequence length="345" mass="38870">MSNYWLNIYKPRGISSAQLVSIVKKILGRTKIGHAGTLDVEAEGILPFAVGEATKLIHLLIDARKTYIFTVKFGMQTNSGDCAGKVIATKYCVPSQEEAYAVCSKFIGNVTQIPPAFSALKVNGVRAYKLAREEKKVELKPRNTTIYDLKCLNFDEKNATATYYTECSKGTYIRTLAEDLALSLQSLGFVIELRRTQVGIFKEENAIRIKSPDEITKNALEEKSIKIEAILDDILVLDATDSQAQQIKYGQKCLFNYEKDFRHLAKFAYREEFKGNTERSTTAYTLVREDASTGLTYKLPLEVEFGKMSIDLVWVRYKGTLLAIGSLNKSCFNSLRVFNLTQDFF</sequence>
<dbReference type="EC" id="5.4.99.25" evidence="1"/>
<dbReference type="EMBL" id="CP001227">
    <property type="protein sequence ID" value="ACR47054.1"/>
    <property type="molecule type" value="Genomic_DNA"/>
</dbReference>
<dbReference type="RefSeq" id="WP_012736360.1">
    <property type="nucleotide sequence ID" value="NC_012730.1"/>
</dbReference>
<dbReference type="SMR" id="C4K0F2"/>
<dbReference type="KEGG" id="rpk:RPR_00270"/>
<dbReference type="HOGENOM" id="CLU_032087_0_3_5"/>
<dbReference type="Proteomes" id="UP000005015">
    <property type="component" value="Chromosome"/>
</dbReference>
<dbReference type="GO" id="GO:0003723">
    <property type="term" value="F:RNA binding"/>
    <property type="evidence" value="ECO:0007669"/>
    <property type="project" value="InterPro"/>
</dbReference>
<dbReference type="GO" id="GO:0160148">
    <property type="term" value="F:tRNA pseudouridine(55) synthase activity"/>
    <property type="evidence" value="ECO:0007669"/>
    <property type="project" value="UniProtKB-EC"/>
</dbReference>
<dbReference type="GO" id="GO:1990481">
    <property type="term" value="P:mRNA pseudouridine synthesis"/>
    <property type="evidence" value="ECO:0007669"/>
    <property type="project" value="TreeGrafter"/>
</dbReference>
<dbReference type="GO" id="GO:0031119">
    <property type="term" value="P:tRNA pseudouridine synthesis"/>
    <property type="evidence" value="ECO:0007669"/>
    <property type="project" value="UniProtKB-UniRule"/>
</dbReference>
<dbReference type="CDD" id="cd02573">
    <property type="entry name" value="PseudoU_synth_EcTruB"/>
    <property type="match status" value="1"/>
</dbReference>
<dbReference type="Gene3D" id="3.30.2350.10">
    <property type="entry name" value="Pseudouridine synthase"/>
    <property type="match status" value="1"/>
</dbReference>
<dbReference type="HAMAP" id="MF_01080">
    <property type="entry name" value="TruB_bact"/>
    <property type="match status" value="1"/>
</dbReference>
<dbReference type="InterPro" id="IPR020103">
    <property type="entry name" value="PsdUridine_synth_cat_dom_sf"/>
</dbReference>
<dbReference type="InterPro" id="IPR002501">
    <property type="entry name" value="PsdUridine_synth_N"/>
</dbReference>
<dbReference type="InterPro" id="IPR005728">
    <property type="entry name" value="RPE1"/>
</dbReference>
<dbReference type="InterPro" id="IPR014780">
    <property type="entry name" value="tRNA_psdUridine_synth_TruB"/>
</dbReference>
<dbReference type="InterPro" id="IPR032819">
    <property type="entry name" value="TruB_C"/>
</dbReference>
<dbReference type="NCBIfam" id="TIGR01045">
    <property type="entry name" value="RPE1"/>
    <property type="match status" value="1"/>
</dbReference>
<dbReference type="NCBIfam" id="TIGR00431">
    <property type="entry name" value="TruB"/>
    <property type="match status" value="1"/>
</dbReference>
<dbReference type="PANTHER" id="PTHR13767:SF2">
    <property type="entry name" value="PSEUDOURIDYLATE SYNTHASE TRUB1"/>
    <property type="match status" value="1"/>
</dbReference>
<dbReference type="PANTHER" id="PTHR13767">
    <property type="entry name" value="TRNA-PSEUDOURIDINE SYNTHASE"/>
    <property type="match status" value="1"/>
</dbReference>
<dbReference type="Pfam" id="PF16198">
    <property type="entry name" value="TruB_C_2"/>
    <property type="match status" value="1"/>
</dbReference>
<dbReference type="Pfam" id="PF01509">
    <property type="entry name" value="TruB_N"/>
    <property type="match status" value="1"/>
</dbReference>
<dbReference type="SUPFAM" id="SSF55120">
    <property type="entry name" value="Pseudouridine synthase"/>
    <property type="match status" value="1"/>
</dbReference>
<protein>
    <recommendedName>
        <fullName evidence="1">tRNA pseudouridine synthase B</fullName>
        <ecNumber evidence="1">5.4.99.25</ecNumber>
    </recommendedName>
    <alternativeName>
        <fullName evidence="1">tRNA pseudouridine(55) synthase</fullName>
        <shortName evidence="1">Psi55 synthase</shortName>
    </alternativeName>
    <alternativeName>
        <fullName evidence="1">tRNA pseudouridylate synthase</fullName>
    </alternativeName>
    <alternativeName>
        <fullName evidence="1">tRNA-uridine isomerase</fullName>
    </alternativeName>
</protein>